<comment type="function">
    <text evidence="3">Member of the two-component regulatory system NarS/NarL involved in gene expression during aerobic nitrate metabolism (PubMed:25659431). Plays therefore a crucial role in anaerobic survival of mycobacteria in host. Functions as a sensor protein kinase which is autophosphorylated at a histidine residue and transfers its phosphate group to the conserved aspartic acid residue in the regulatory domain of NarL (PubMed:25659431). In turn, NarL binds to the upstream promoter regions of target genes to regulate their expression during aerobic nitrate metabolism (PubMed:25659431).</text>
</comment>
<comment type="catalytic activity">
    <reaction evidence="3">
        <text>ATP + protein L-histidine = ADP + protein N-phospho-L-histidine.</text>
        <dbReference type="EC" id="2.7.13.3"/>
    </reaction>
</comment>
<comment type="subcellular location">
    <subcellularLocation>
        <location evidence="5">Cell membrane</location>
        <topology evidence="5">Multi-pass membrane protein</topology>
    </subcellularLocation>
</comment>
<comment type="PTM">
    <text evidence="3">Autophosphorylated on His-241.</text>
</comment>
<accession>O53857</accession>
<accession>L0T7P3</accession>
<keyword id="KW-1003">Cell membrane</keyword>
<keyword id="KW-0418">Kinase</keyword>
<keyword id="KW-0472">Membrane</keyword>
<keyword id="KW-0597">Phosphoprotein</keyword>
<keyword id="KW-1185">Reference proteome</keyword>
<keyword id="KW-0808">Transferase</keyword>
<keyword id="KW-0812">Transmembrane</keyword>
<keyword id="KW-1133">Transmembrane helix</keyword>
<keyword id="KW-0902">Two-component regulatory system</keyword>
<protein>
    <recommendedName>
        <fullName evidence="4">Sensor histidine kinase NarS</fullName>
        <ecNumber evidence="3">2.7.13.3</ecNumber>
    </recommendedName>
</protein>
<organism>
    <name type="scientific">Mycobacterium tuberculosis (strain ATCC 25618 / H37Rv)</name>
    <dbReference type="NCBI Taxonomy" id="83332"/>
    <lineage>
        <taxon>Bacteria</taxon>
        <taxon>Bacillati</taxon>
        <taxon>Actinomycetota</taxon>
        <taxon>Actinomycetes</taxon>
        <taxon>Mycobacteriales</taxon>
        <taxon>Mycobacteriaceae</taxon>
        <taxon>Mycobacterium</taxon>
        <taxon>Mycobacterium tuberculosis complex</taxon>
    </lineage>
</organism>
<gene>
    <name evidence="4" type="primary">narS</name>
    <name type="ordered locus">Rv0845</name>
</gene>
<feature type="chain" id="PRO_0000401133" description="Sensor histidine kinase NarS">
    <location>
        <begin position="1"/>
        <end position="425"/>
    </location>
</feature>
<feature type="transmembrane region" description="Helical" evidence="1">
    <location>
        <begin position="42"/>
        <end position="62"/>
    </location>
</feature>
<feature type="transmembrane region" description="Helical" evidence="1">
    <location>
        <begin position="71"/>
        <end position="91"/>
    </location>
</feature>
<feature type="transmembrane region" description="Helical" evidence="1">
    <location>
        <begin position="107"/>
        <end position="127"/>
    </location>
</feature>
<feature type="transmembrane region" description="Helical" evidence="1">
    <location>
        <begin position="130"/>
        <end position="150"/>
    </location>
</feature>
<feature type="transmembrane region" description="Helical" evidence="1">
    <location>
        <begin position="155"/>
        <end position="175"/>
    </location>
</feature>
<feature type="transmembrane region" description="Helical" evidence="1">
    <location>
        <begin position="181"/>
        <end position="201"/>
    </location>
</feature>
<feature type="domain" description="Histidine kinase" evidence="2">
    <location>
        <begin position="224"/>
        <end position="425"/>
    </location>
</feature>
<feature type="modified residue" description="Phosphohistidine; by autocatalysis" evidence="2 3">
    <location>
        <position position="241"/>
    </location>
</feature>
<feature type="mutagenesis site" description="Complete loss of autophosphorylation." evidence="3">
    <original>H</original>
    <variation>Q</variation>
    <location>
        <position position="241"/>
    </location>
</feature>
<reference key="1">
    <citation type="journal article" date="1998" name="Nature">
        <title>Deciphering the biology of Mycobacterium tuberculosis from the complete genome sequence.</title>
        <authorList>
            <person name="Cole S.T."/>
            <person name="Brosch R."/>
            <person name="Parkhill J."/>
            <person name="Garnier T."/>
            <person name="Churcher C.M."/>
            <person name="Harris D.E."/>
            <person name="Gordon S.V."/>
            <person name="Eiglmeier K."/>
            <person name="Gas S."/>
            <person name="Barry C.E. III"/>
            <person name="Tekaia F."/>
            <person name="Badcock K."/>
            <person name="Basham D."/>
            <person name="Brown D."/>
            <person name="Chillingworth T."/>
            <person name="Connor R."/>
            <person name="Davies R.M."/>
            <person name="Devlin K."/>
            <person name="Feltwell T."/>
            <person name="Gentles S."/>
            <person name="Hamlin N."/>
            <person name="Holroyd S."/>
            <person name="Hornsby T."/>
            <person name="Jagels K."/>
            <person name="Krogh A."/>
            <person name="McLean J."/>
            <person name="Moule S."/>
            <person name="Murphy L.D."/>
            <person name="Oliver S."/>
            <person name="Osborne J."/>
            <person name="Quail M.A."/>
            <person name="Rajandream M.A."/>
            <person name="Rogers J."/>
            <person name="Rutter S."/>
            <person name="Seeger K."/>
            <person name="Skelton S."/>
            <person name="Squares S."/>
            <person name="Squares R."/>
            <person name="Sulston J.E."/>
            <person name="Taylor K."/>
            <person name="Whitehead S."/>
            <person name="Barrell B.G."/>
        </authorList>
    </citation>
    <scope>NUCLEOTIDE SEQUENCE [LARGE SCALE GENOMIC DNA]</scope>
    <source>
        <strain>ATCC 25618 / H37Rv</strain>
    </source>
</reference>
<reference key="2">
    <citation type="journal article" date="2003" name="Infect. Immun.">
        <title>Deletion of two-component regulatory systems increases the virulence of Mycobacterium tuberculosis.</title>
        <authorList>
            <person name="Parish T."/>
            <person name="Smith D.A."/>
            <person name="Kendall S."/>
            <person name="Casali N."/>
            <person name="Bancroft G.J."/>
            <person name="Stoker N.G."/>
        </authorList>
    </citation>
    <scope>FUNCTION</scope>
    <scope>GENE NAME</scope>
    <source>
        <strain>ATCC 25618 / H37Rv</strain>
    </source>
</reference>
<reference key="3">
    <citation type="journal article" date="2011" name="Mol. Cell. Proteomics">
        <title>Proteogenomic analysis of Mycobacterium tuberculosis by high resolution mass spectrometry.</title>
        <authorList>
            <person name="Kelkar D.S."/>
            <person name="Kumar D."/>
            <person name="Kumar P."/>
            <person name="Balakrishnan L."/>
            <person name="Muthusamy B."/>
            <person name="Yadav A.K."/>
            <person name="Shrivastava P."/>
            <person name="Marimuthu A."/>
            <person name="Anand S."/>
            <person name="Sundaram H."/>
            <person name="Kingsbury R."/>
            <person name="Harsha H.C."/>
            <person name="Nair B."/>
            <person name="Prasad T.S."/>
            <person name="Chauhan D.S."/>
            <person name="Katoch K."/>
            <person name="Katoch V.M."/>
            <person name="Kumar P."/>
            <person name="Chaerkady R."/>
            <person name="Ramachandran S."/>
            <person name="Dash D."/>
            <person name="Pandey A."/>
        </authorList>
    </citation>
    <scope>IDENTIFICATION BY MASS SPECTROMETRY [LARGE SCALE ANALYSIS]</scope>
    <source>
        <strain>ATCC 25618 / H37Rv</strain>
    </source>
</reference>
<reference key="4">
    <citation type="journal article" date="2015" name="J. Biol. Chem.">
        <title>Mycobacterium tuberculosis response regulators, DevR and NarL, interact in vivo and co-regulate gene expression during aerobic nitrate metabolism.</title>
        <authorList>
            <person name="Malhotra V."/>
            <person name="Agrawal R."/>
            <person name="Duncan T.R."/>
            <person name="Saini D.K."/>
            <person name="Clark-Curtiss J.E."/>
        </authorList>
    </citation>
    <scope>FUNCTION</scope>
    <scope>CATALYTIC ACTIVITY</scope>
    <scope>AUTOPHOSPHORYLATION</scope>
    <scope>PHOSPHORYLATION AT HIS-241</scope>
    <scope>MUTAGENESIS OF HIS-241</scope>
    <source>
        <strain>ATCC 25618 / H37Rv</strain>
    </source>
</reference>
<dbReference type="EC" id="2.7.13.3" evidence="3"/>
<dbReference type="EMBL" id="AL123456">
    <property type="protein sequence ID" value="CCP43593.1"/>
    <property type="molecule type" value="Genomic_DNA"/>
</dbReference>
<dbReference type="PIR" id="E70813">
    <property type="entry name" value="E70813"/>
</dbReference>
<dbReference type="RefSeq" id="NP_215360.1">
    <property type="nucleotide sequence ID" value="NC_000962.3"/>
</dbReference>
<dbReference type="RefSeq" id="WP_003898611.1">
    <property type="nucleotide sequence ID" value="NC_000962.3"/>
</dbReference>
<dbReference type="SMR" id="O53857"/>
<dbReference type="FunCoup" id="O53857">
    <property type="interactions" value="1"/>
</dbReference>
<dbReference type="STRING" id="83332.Rv0845"/>
<dbReference type="iPTMnet" id="O53857"/>
<dbReference type="PaxDb" id="83332-Rv0845"/>
<dbReference type="DNASU" id="885218"/>
<dbReference type="GeneID" id="885218"/>
<dbReference type="KEGG" id="mtu:Rv0845"/>
<dbReference type="KEGG" id="mtv:RVBD_0845"/>
<dbReference type="TubercuList" id="Rv0845"/>
<dbReference type="eggNOG" id="COG4585">
    <property type="taxonomic scope" value="Bacteria"/>
</dbReference>
<dbReference type="InParanoid" id="O53857"/>
<dbReference type="OrthoDB" id="5243952at2"/>
<dbReference type="PhylomeDB" id="O53857"/>
<dbReference type="Proteomes" id="UP000001584">
    <property type="component" value="Chromosome"/>
</dbReference>
<dbReference type="GO" id="GO:0005886">
    <property type="term" value="C:plasma membrane"/>
    <property type="evidence" value="ECO:0000318"/>
    <property type="project" value="GO_Central"/>
</dbReference>
<dbReference type="GO" id="GO:0004673">
    <property type="term" value="F:protein histidine kinase activity"/>
    <property type="evidence" value="ECO:0007669"/>
    <property type="project" value="UniProtKB-EC"/>
</dbReference>
<dbReference type="GO" id="GO:0004672">
    <property type="term" value="F:protein kinase activity"/>
    <property type="evidence" value="ECO:0000318"/>
    <property type="project" value="GO_Central"/>
</dbReference>
<dbReference type="GO" id="GO:0000160">
    <property type="term" value="P:phosphorelay signal transduction system"/>
    <property type="evidence" value="ECO:0007669"/>
    <property type="project" value="UniProtKB-KW"/>
</dbReference>
<dbReference type="CDD" id="cd16917">
    <property type="entry name" value="HATPase_UhpB-NarQ-NarX-like"/>
    <property type="match status" value="1"/>
</dbReference>
<dbReference type="Gene3D" id="3.30.565.10">
    <property type="entry name" value="Histidine kinase-like ATPase, C-terminal domain"/>
    <property type="match status" value="1"/>
</dbReference>
<dbReference type="InterPro" id="IPR036890">
    <property type="entry name" value="HATPase_C_sf"/>
</dbReference>
<dbReference type="InterPro" id="IPR005467">
    <property type="entry name" value="His_kinase_dom"/>
</dbReference>
<dbReference type="InterPro" id="IPR050482">
    <property type="entry name" value="Sensor_HK_TwoCompSys"/>
</dbReference>
<dbReference type="PANTHER" id="PTHR24421">
    <property type="entry name" value="NITRATE/NITRITE SENSOR PROTEIN NARX-RELATED"/>
    <property type="match status" value="1"/>
</dbReference>
<dbReference type="PANTHER" id="PTHR24421:SF37">
    <property type="entry name" value="SENSOR HISTIDINE KINASE NARS"/>
    <property type="match status" value="1"/>
</dbReference>
<dbReference type="Pfam" id="PF02518">
    <property type="entry name" value="HATPase_c"/>
    <property type="match status" value="1"/>
</dbReference>
<dbReference type="SMART" id="SM00387">
    <property type="entry name" value="HATPase_c"/>
    <property type="match status" value="1"/>
</dbReference>
<dbReference type="SUPFAM" id="SSF55874">
    <property type="entry name" value="ATPase domain of HSP90 chaperone/DNA topoisomerase II/histidine kinase"/>
    <property type="match status" value="1"/>
</dbReference>
<dbReference type="PROSITE" id="PS50109">
    <property type="entry name" value="HIS_KIN"/>
    <property type="match status" value="1"/>
</dbReference>
<proteinExistence type="evidence at protein level"/>
<name>NARS_MYCTU</name>
<evidence type="ECO:0000255" key="1"/>
<evidence type="ECO:0000255" key="2">
    <source>
        <dbReference type="PROSITE-ProRule" id="PRU00107"/>
    </source>
</evidence>
<evidence type="ECO:0000269" key="3">
    <source>
    </source>
</evidence>
<evidence type="ECO:0000303" key="4">
    <source>
    </source>
</evidence>
<evidence type="ECO:0000305" key="5"/>
<sequence length="425" mass="45784">MPSYGNLGRLGGRHEYGVLVAMTSSAELDRVRWAHQLRSYRIASVLRIGVVGLMVAAMVVGTSRSEWPQQIVLIGVYAVAALWALLLAYSASRRFFALRRFRSMGRLEPFAFTAVDVLILTGFQLLSTDGIYPLLIMILLPVLVGLDVSTRRAAVVLACTLVGFAVAVLGDPVMLRAIGWPETIFRFALYAFLCATALMVVRIEERHTRSVAGLSALRAELLAQTMTASEVLQRRIAEAIHDGPLQDVLAARQELIELDAVTPGDERVGRALAGLQSASERLRQATFELHPAVLEQVGLGPAVKQLAASTAQRSGIKISTDIDYPIRSGIDPIVFGVVRELLSNVVRHSGATTASVRLGITDEKCVLDVADDGVGVTGDTMARRLGEGHIGLASHRARVDAAGGVLVFLATPRGTHVCVELPLKR</sequence>